<accession>C6DHB7</accession>
<evidence type="ECO:0000255" key="1">
    <source>
        <dbReference type="HAMAP-Rule" id="MF_00197"/>
    </source>
</evidence>
<reference key="1">
    <citation type="submission" date="2009-07" db="EMBL/GenBank/DDBJ databases">
        <title>Complete sequence of Pectobacterium carotovorum subsp. carotovorum PC1.</title>
        <authorList>
            <consortium name="US DOE Joint Genome Institute"/>
            <person name="Lucas S."/>
            <person name="Copeland A."/>
            <person name="Lapidus A."/>
            <person name="Glavina del Rio T."/>
            <person name="Tice H."/>
            <person name="Bruce D."/>
            <person name="Goodwin L."/>
            <person name="Pitluck S."/>
            <person name="Munk A.C."/>
            <person name="Brettin T."/>
            <person name="Detter J.C."/>
            <person name="Han C."/>
            <person name="Tapia R."/>
            <person name="Larimer F."/>
            <person name="Land M."/>
            <person name="Hauser L."/>
            <person name="Kyrpides N."/>
            <person name="Mikhailova N."/>
            <person name="Balakrishnan V."/>
            <person name="Glasner J."/>
            <person name="Perna N.T."/>
        </authorList>
    </citation>
    <scope>NUCLEOTIDE SEQUENCE [LARGE SCALE GENOMIC DNA]</scope>
    <source>
        <strain>PC1</strain>
    </source>
</reference>
<comment type="function">
    <text evidence="1">Catalyzes the stereoinversion of LL-2,6-diaminopimelate (L,L-DAP) to meso-diaminopimelate (meso-DAP), a precursor of L-lysine and an essential component of the bacterial peptidoglycan.</text>
</comment>
<comment type="catalytic activity">
    <reaction evidence="1">
        <text>(2S,6S)-2,6-diaminopimelate = meso-2,6-diaminopimelate</text>
        <dbReference type="Rhea" id="RHEA:15393"/>
        <dbReference type="ChEBI" id="CHEBI:57609"/>
        <dbReference type="ChEBI" id="CHEBI:57791"/>
        <dbReference type="EC" id="5.1.1.7"/>
    </reaction>
</comment>
<comment type="pathway">
    <text evidence="1">Amino-acid biosynthesis; L-lysine biosynthesis via DAP pathway; DL-2,6-diaminopimelate from LL-2,6-diaminopimelate: step 1/1.</text>
</comment>
<comment type="subunit">
    <text evidence="1">Homodimer.</text>
</comment>
<comment type="subcellular location">
    <subcellularLocation>
        <location evidence="1">Cytoplasm</location>
    </subcellularLocation>
</comment>
<comment type="similarity">
    <text evidence="1">Belongs to the diaminopimelate epimerase family.</text>
</comment>
<protein>
    <recommendedName>
        <fullName evidence="1">Diaminopimelate epimerase</fullName>
        <shortName evidence="1">DAP epimerase</shortName>
        <ecNumber evidence="1">5.1.1.7</ecNumber>
    </recommendedName>
    <alternativeName>
        <fullName evidence="1">PLP-independent amino acid racemase</fullName>
    </alternativeName>
</protein>
<organism>
    <name type="scientific">Pectobacterium carotovorum subsp. carotovorum (strain PC1)</name>
    <dbReference type="NCBI Taxonomy" id="561230"/>
    <lineage>
        <taxon>Bacteria</taxon>
        <taxon>Pseudomonadati</taxon>
        <taxon>Pseudomonadota</taxon>
        <taxon>Gammaproteobacteria</taxon>
        <taxon>Enterobacterales</taxon>
        <taxon>Pectobacteriaceae</taxon>
        <taxon>Pectobacterium</taxon>
    </lineage>
</organism>
<feature type="chain" id="PRO_1000204064" description="Diaminopimelate epimerase">
    <location>
        <begin position="1"/>
        <end position="274"/>
    </location>
</feature>
<feature type="active site" description="Proton donor" evidence="1">
    <location>
        <position position="73"/>
    </location>
</feature>
<feature type="active site" description="Proton acceptor" evidence="1">
    <location>
        <position position="217"/>
    </location>
</feature>
<feature type="binding site" evidence="1">
    <location>
        <position position="11"/>
    </location>
    <ligand>
        <name>substrate</name>
    </ligand>
</feature>
<feature type="binding site" evidence="1">
    <location>
        <position position="44"/>
    </location>
    <ligand>
        <name>substrate</name>
    </ligand>
</feature>
<feature type="binding site" evidence="1">
    <location>
        <position position="64"/>
    </location>
    <ligand>
        <name>substrate</name>
    </ligand>
</feature>
<feature type="binding site" evidence="1">
    <location>
        <begin position="74"/>
        <end position="75"/>
    </location>
    <ligand>
        <name>substrate</name>
    </ligand>
</feature>
<feature type="binding site" evidence="1">
    <location>
        <position position="157"/>
    </location>
    <ligand>
        <name>substrate</name>
    </ligand>
</feature>
<feature type="binding site" evidence="1">
    <location>
        <position position="190"/>
    </location>
    <ligand>
        <name>substrate</name>
    </ligand>
</feature>
<feature type="binding site" evidence="1">
    <location>
        <begin position="208"/>
        <end position="209"/>
    </location>
    <ligand>
        <name>substrate</name>
    </ligand>
</feature>
<feature type="binding site" evidence="1">
    <location>
        <begin position="218"/>
        <end position="219"/>
    </location>
    <ligand>
        <name>substrate</name>
    </ligand>
</feature>
<feature type="site" description="Could be important to modulate the pK values of the two catalytic cysteine residues" evidence="1">
    <location>
        <position position="159"/>
    </location>
</feature>
<feature type="site" description="Could be important to modulate the pK values of the two catalytic cysteine residues" evidence="1">
    <location>
        <position position="208"/>
    </location>
</feature>
<feature type="site" description="Important for dimerization" evidence="1">
    <location>
        <position position="268"/>
    </location>
</feature>
<dbReference type="EC" id="5.1.1.7" evidence="1"/>
<dbReference type="EMBL" id="CP001657">
    <property type="protein sequence ID" value="ACT14990.1"/>
    <property type="molecule type" value="Genomic_DNA"/>
</dbReference>
<dbReference type="RefSeq" id="WP_015842070.1">
    <property type="nucleotide sequence ID" value="NC_012917.1"/>
</dbReference>
<dbReference type="SMR" id="C6DHB7"/>
<dbReference type="STRING" id="561230.PC1_3975"/>
<dbReference type="GeneID" id="67792114"/>
<dbReference type="KEGG" id="pct:PC1_3975"/>
<dbReference type="eggNOG" id="COG0253">
    <property type="taxonomic scope" value="Bacteria"/>
</dbReference>
<dbReference type="HOGENOM" id="CLU_053306_1_1_6"/>
<dbReference type="OrthoDB" id="9805408at2"/>
<dbReference type="UniPathway" id="UPA00034">
    <property type="reaction ID" value="UER00025"/>
</dbReference>
<dbReference type="Proteomes" id="UP000002736">
    <property type="component" value="Chromosome"/>
</dbReference>
<dbReference type="GO" id="GO:0005829">
    <property type="term" value="C:cytosol"/>
    <property type="evidence" value="ECO:0007669"/>
    <property type="project" value="TreeGrafter"/>
</dbReference>
<dbReference type="GO" id="GO:0008837">
    <property type="term" value="F:diaminopimelate epimerase activity"/>
    <property type="evidence" value="ECO:0007669"/>
    <property type="project" value="UniProtKB-UniRule"/>
</dbReference>
<dbReference type="GO" id="GO:0009089">
    <property type="term" value="P:lysine biosynthetic process via diaminopimelate"/>
    <property type="evidence" value="ECO:0007669"/>
    <property type="project" value="UniProtKB-UniRule"/>
</dbReference>
<dbReference type="FunFam" id="3.10.310.10:FF:000001">
    <property type="entry name" value="Diaminopimelate epimerase"/>
    <property type="match status" value="1"/>
</dbReference>
<dbReference type="FunFam" id="3.10.310.10:FF:000002">
    <property type="entry name" value="Diaminopimelate epimerase"/>
    <property type="match status" value="1"/>
</dbReference>
<dbReference type="Gene3D" id="3.10.310.10">
    <property type="entry name" value="Diaminopimelate Epimerase, Chain A, domain 1"/>
    <property type="match status" value="2"/>
</dbReference>
<dbReference type="HAMAP" id="MF_00197">
    <property type="entry name" value="DAP_epimerase"/>
    <property type="match status" value="1"/>
</dbReference>
<dbReference type="InterPro" id="IPR018510">
    <property type="entry name" value="DAP_epimerase_AS"/>
</dbReference>
<dbReference type="InterPro" id="IPR001653">
    <property type="entry name" value="DAP_epimerase_DapF"/>
</dbReference>
<dbReference type="NCBIfam" id="TIGR00652">
    <property type="entry name" value="DapF"/>
    <property type="match status" value="1"/>
</dbReference>
<dbReference type="PANTHER" id="PTHR31689:SF0">
    <property type="entry name" value="DIAMINOPIMELATE EPIMERASE"/>
    <property type="match status" value="1"/>
</dbReference>
<dbReference type="PANTHER" id="PTHR31689">
    <property type="entry name" value="DIAMINOPIMELATE EPIMERASE, CHLOROPLASTIC"/>
    <property type="match status" value="1"/>
</dbReference>
<dbReference type="Pfam" id="PF01678">
    <property type="entry name" value="DAP_epimerase"/>
    <property type="match status" value="2"/>
</dbReference>
<dbReference type="SUPFAM" id="SSF54506">
    <property type="entry name" value="Diaminopimelate epimerase-like"/>
    <property type="match status" value="1"/>
</dbReference>
<dbReference type="PROSITE" id="PS01326">
    <property type="entry name" value="DAP_EPIMERASE"/>
    <property type="match status" value="1"/>
</dbReference>
<keyword id="KW-0028">Amino-acid biosynthesis</keyword>
<keyword id="KW-0963">Cytoplasm</keyword>
<keyword id="KW-0413">Isomerase</keyword>
<keyword id="KW-0457">Lysine biosynthesis</keyword>
<gene>
    <name evidence="1" type="primary">dapF</name>
    <name type="ordered locus">PC1_3975</name>
</gene>
<name>DAPF_PECCP</name>
<proteinExistence type="inferred from homology"/>
<sequence>MQFAKMHGLGNDFMVVDAVTQNVYFSPELIRRLADRHCGVGFDQLLVVEPPYDPELDFHYRIFNADGSEVAQCGNGARCFARFVRLKGLTNKRDIAVSTQTGRMVLSVTDDELVRVNMGEPNFEPQQVPFRAVKAEKTYIMRADEHTVLCGVVSMGNPHCVIQVEDVDTAKVETLGPLLESHERFPERANIGFMQVVDSHTVRLRVYERGAGETQACGSGACAAVAVGIQQGLLSANVRVSLPGGDLDIQWDGPGHPLFMTGPATHVYDGFIHL</sequence>